<name>DAPD_GEOOG</name>
<comment type="function">
    <text evidence="1">Catalyzes the conversion of the cyclic tetrahydrodipicolinate (THDP) into the acyclic N-succinyl-L-2-amino-6-oxopimelate using succinyl-CoA.</text>
</comment>
<comment type="catalytic activity">
    <reaction evidence="1">
        <text>(S)-2,3,4,5-tetrahydrodipicolinate + succinyl-CoA + H2O = (S)-2-succinylamino-6-oxoheptanedioate + CoA</text>
        <dbReference type="Rhea" id="RHEA:17325"/>
        <dbReference type="ChEBI" id="CHEBI:15377"/>
        <dbReference type="ChEBI" id="CHEBI:15685"/>
        <dbReference type="ChEBI" id="CHEBI:16845"/>
        <dbReference type="ChEBI" id="CHEBI:57287"/>
        <dbReference type="ChEBI" id="CHEBI:57292"/>
        <dbReference type="EC" id="2.3.1.117"/>
    </reaction>
</comment>
<comment type="pathway">
    <text evidence="1">Amino-acid biosynthesis; L-lysine biosynthesis via DAP pathway; LL-2,6-diaminopimelate from (S)-tetrahydrodipicolinate (succinylase route): step 1/3.</text>
</comment>
<comment type="subunit">
    <text evidence="1">Homotrimer.</text>
</comment>
<comment type="subcellular location">
    <subcellularLocation>
        <location evidence="1">Cytoplasm</location>
    </subcellularLocation>
</comment>
<comment type="similarity">
    <text evidence="1">Belongs to the type 2 tetrahydrodipicolinate N-succinyltransferase family.</text>
</comment>
<accession>D2S9Y8</accession>
<gene>
    <name evidence="1" type="primary">dapD</name>
    <name type="ordered locus">Gobs_1092</name>
</gene>
<keyword id="KW-0012">Acyltransferase</keyword>
<keyword id="KW-0028">Amino-acid biosynthesis</keyword>
<keyword id="KW-0963">Cytoplasm</keyword>
<keyword id="KW-0220">Diaminopimelate biosynthesis</keyword>
<keyword id="KW-0457">Lysine biosynthesis</keyword>
<keyword id="KW-0460">Magnesium</keyword>
<keyword id="KW-0479">Metal-binding</keyword>
<keyword id="KW-1185">Reference proteome</keyword>
<keyword id="KW-0808">Transferase</keyword>
<sequence length="324" mass="33209">MTDSAPHSAVAAGLATVTPAGTVLDTWYPEPRLGVPAGARPGTTRLGALEISGELGPDYGGLVRRDESRGVEVIAVRTVIPDLAAAPVDTHDVWLRLHLLSHRLVSPRSISMDGVFGLLTNVAWTSAGPVEAATFNVHRLRAALGHVTVFGVDKFPRMVDYVIPSGVRVADGDRVRLGAHLAEGTTVMHEGFVNYNAGTLGPSMVEGRISAGVVVGPNSDIGGGASIMGTLSGGGKQVVSIGSGCLLGANAGIGISLGDNCVVEAGCYVTAGSRVTLPDGSVVKAAELSGRDGLLFRRNSVSGALEALPRTGTWGELNAQLHAN</sequence>
<protein>
    <recommendedName>
        <fullName evidence="1">2,3,4,5-tetrahydropyridine-2,6-dicarboxylate N-succinyltransferase</fullName>
        <ecNumber evidence="1">2.3.1.117</ecNumber>
    </recommendedName>
    <alternativeName>
        <fullName evidence="1">Tetrahydrodipicolinate N-succinyltransferase</fullName>
        <shortName evidence="1">THDP succinyltransferase</shortName>
        <shortName evidence="1">THP succinyltransferase</shortName>
    </alternativeName>
    <alternativeName>
        <fullName evidence="1">Tetrahydropicolinate succinylase</fullName>
    </alternativeName>
</protein>
<evidence type="ECO:0000255" key="1">
    <source>
        <dbReference type="HAMAP-Rule" id="MF_02122"/>
    </source>
</evidence>
<organism>
    <name type="scientific">Geodermatophilus obscurus (strain ATCC 25078 / DSM 43160 / JCM 3152 / CCUG 61914 / KCC A-0152 / KCTC 9177 / NBRC 13315 / NRRL B-3577 / G-20)</name>
    <dbReference type="NCBI Taxonomy" id="526225"/>
    <lineage>
        <taxon>Bacteria</taxon>
        <taxon>Bacillati</taxon>
        <taxon>Actinomycetota</taxon>
        <taxon>Actinomycetes</taxon>
        <taxon>Geodermatophilales</taxon>
        <taxon>Geodermatophilaceae</taxon>
        <taxon>Geodermatophilus</taxon>
    </lineage>
</organism>
<reference key="1">
    <citation type="submission" date="2010-01" db="EMBL/GenBank/DDBJ databases">
        <title>The complete genome of Geodermatophilus obscurus DSM 43160.</title>
        <authorList>
            <consortium name="US DOE Joint Genome Institute (JGI-PGF)"/>
            <person name="Lucas S."/>
            <person name="Copeland A."/>
            <person name="Lapidus A."/>
            <person name="Glavina del Rio T."/>
            <person name="Dalin E."/>
            <person name="Tice H."/>
            <person name="Bruce D."/>
            <person name="Goodwin L."/>
            <person name="Pitluck S."/>
            <person name="Kyrpides N."/>
            <person name="Mavromatis K."/>
            <person name="Ivanova N."/>
            <person name="Munk A.C."/>
            <person name="Brettin T."/>
            <person name="Detter J.C."/>
            <person name="Han C."/>
            <person name="Larimer F."/>
            <person name="Land M."/>
            <person name="Hauser L."/>
            <person name="Markowitz V."/>
            <person name="Cheng J.-F."/>
            <person name="Hugenholtz P."/>
            <person name="Woyke T."/>
            <person name="Wu D."/>
            <person name="Jando M."/>
            <person name="Schneider S."/>
            <person name="Klenk H.-P."/>
            <person name="Eisen J.A."/>
        </authorList>
    </citation>
    <scope>NUCLEOTIDE SEQUENCE [LARGE SCALE GENOMIC DNA]</scope>
    <source>
        <strain>ATCC 25078 / DSM 43160 / JCM 3152 / CCUG 61914 / KCC A-0152 / KCTC 9177 / NBRC 13315 / NRRL B-3577 / G-20</strain>
    </source>
</reference>
<feature type="chain" id="PRO_0000412259" description="2,3,4,5-tetrahydropyridine-2,6-dicarboxylate N-succinyltransferase">
    <location>
        <begin position="1"/>
        <end position="324"/>
    </location>
</feature>
<feature type="active site" description="Acyl-anhydride intermediate" evidence="1">
    <location>
        <position position="206"/>
    </location>
</feature>
<feature type="binding site" evidence="1">
    <location>
        <position position="173"/>
    </location>
    <ligand>
        <name>Mg(2+)</name>
        <dbReference type="ChEBI" id="CHEBI:18420"/>
        <label>1</label>
        <note>ligand shared between trimeric partners</note>
    </ligand>
</feature>
<feature type="binding site" evidence="1">
    <location>
        <position position="190"/>
    </location>
    <ligand>
        <name>Mg(2+)</name>
        <dbReference type="ChEBI" id="CHEBI:18420"/>
        <label>2</label>
        <note>ligand shared between trimeric partners</note>
    </ligand>
</feature>
<feature type="binding site" evidence="1">
    <location>
        <position position="208"/>
    </location>
    <ligand>
        <name>succinyl-CoA</name>
        <dbReference type="ChEBI" id="CHEBI:57292"/>
    </ligand>
</feature>
<feature type="binding site" evidence="1">
    <location>
        <position position="223"/>
    </location>
    <ligand>
        <name>succinyl-CoA</name>
        <dbReference type="ChEBI" id="CHEBI:57292"/>
    </ligand>
</feature>
<feature type="binding site" evidence="1">
    <location>
        <position position="226"/>
    </location>
    <ligand>
        <name>succinyl-CoA</name>
        <dbReference type="ChEBI" id="CHEBI:57292"/>
    </ligand>
</feature>
<feature type="binding site" evidence="1">
    <location>
        <position position="249"/>
    </location>
    <ligand>
        <name>succinyl-CoA</name>
        <dbReference type="ChEBI" id="CHEBI:57292"/>
    </ligand>
</feature>
<feature type="binding site" evidence="1">
    <location>
        <begin position="264"/>
        <end position="265"/>
    </location>
    <ligand>
        <name>succinyl-CoA</name>
        <dbReference type="ChEBI" id="CHEBI:57292"/>
    </ligand>
</feature>
<feature type="binding site" evidence="1">
    <location>
        <position position="272"/>
    </location>
    <ligand>
        <name>succinyl-CoA</name>
        <dbReference type="ChEBI" id="CHEBI:57292"/>
    </ligand>
</feature>
<feature type="binding site" evidence="1">
    <location>
        <position position="284"/>
    </location>
    <ligand>
        <name>succinyl-CoA</name>
        <dbReference type="ChEBI" id="CHEBI:57292"/>
    </ligand>
</feature>
<feature type="binding site" evidence="1">
    <location>
        <begin position="297"/>
        <end position="300"/>
    </location>
    <ligand>
        <name>succinyl-CoA</name>
        <dbReference type="ChEBI" id="CHEBI:57292"/>
    </ligand>
</feature>
<proteinExistence type="inferred from homology"/>
<dbReference type="EC" id="2.3.1.117" evidence="1"/>
<dbReference type="EMBL" id="CP001867">
    <property type="protein sequence ID" value="ADB73851.1"/>
    <property type="molecule type" value="Genomic_DNA"/>
</dbReference>
<dbReference type="RefSeq" id="WP_012947292.1">
    <property type="nucleotide sequence ID" value="NC_013757.1"/>
</dbReference>
<dbReference type="SMR" id="D2S9Y8"/>
<dbReference type="STRING" id="526225.Gobs_1092"/>
<dbReference type="KEGG" id="gob:Gobs_1092"/>
<dbReference type="eggNOG" id="COG2171">
    <property type="taxonomic scope" value="Bacteria"/>
</dbReference>
<dbReference type="HOGENOM" id="CLU_057490_1_0_11"/>
<dbReference type="OrthoDB" id="9782799at2"/>
<dbReference type="UniPathway" id="UPA00034">
    <property type="reaction ID" value="UER00019"/>
</dbReference>
<dbReference type="Proteomes" id="UP000001382">
    <property type="component" value="Chromosome"/>
</dbReference>
<dbReference type="GO" id="GO:0005737">
    <property type="term" value="C:cytoplasm"/>
    <property type="evidence" value="ECO:0007669"/>
    <property type="project" value="UniProtKB-SubCell"/>
</dbReference>
<dbReference type="GO" id="GO:0008666">
    <property type="term" value="F:2,3,4,5-tetrahydropyridine-2,6-dicarboxylate N-succinyltransferase activity"/>
    <property type="evidence" value="ECO:0007669"/>
    <property type="project" value="UniProtKB-UniRule"/>
</dbReference>
<dbReference type="GO" id="GO:0000287">
    <property type="term" value="F:magnesium ion binding"/>
    <property type="evidence" value="ECO:0007669"/>
    <property type="project" value="UniProtKB-UniRule"/>
</dbReference>
<dbReference type="GO" id="GO:0019877">
    <property type="term" value="P:diaminopimelate biosynthetic process"/>
    <property type="evidence" value="ECO:0007669"/>
    <property type="project" value="UniProtKB-UniRule"/>
</dbReference>
<dbReference type="GO" id="GO:0009089">
    <property type="term" value="P:lysine biosynthetic process via diaminopimelate"/>
    <property type="evidence" value="ECO:0007669"/>
    <property type="project" value="UniProtKB-UniRule"/>
</dbReference>
<dbReference type="CDD" id="cd04649">
    <property type="entry name" value="LbH_THP_succinylT_putative"/>
    <property type="match status" value="1"/>
</dbReference>
<dbReference type="Gene3D" id="3.30.70.2010">
    <property type="match status" value="1"/>
</dbReference>
<dbReference type="Gene3D" id="2.160.10.10">
    <property type="entry name" value="Hexapeptide repeat proteins"/>
    <property type="match status" value="1"/>
</dbReference>
<dbReference type="Gene3D" id="3.30.60.70">
    <property type="entry name" value="Trimeric LpxA-like enzymes"/>
    <property type="match status" value="1"/>
</dbReference>
<dbReference type="HAMAP" id="MF_02122">
    <property type="entry name" value="DapD_type2"/>
    <property type="match status" value="1"/>
</dbReference>
<dbReference type="InterPro" id="IPR019875">
    <property type="entry name" value="DapD_actinobacteria"/>
</dbReference>
<dbReference type="InterPro" id="IPR001451">
    <property type="entry name" value="Hexapep"/>
</dbReference>
<dbReference type="InterPro" id="IPR032784">
    <property type="entry name" value="THDPS_M"/>
</dbReference>
<dbReference type="InterPro" id="IPR038361">
    <property type="entry name" value="THDPS_M_sf"/>
</dbReference>
<dbReference type="InterPro" id="IPR011004">
    <property type="entry name" value="Trimer_LpxA-like_sf"/>
</dbReference>
<dbReference type="InterPro" id="IPR026586">
    <property type="entry name" value="Type2_DapD"/>
</dbReference>
<dbReference type="NCBIfam" id="TIGR03535">
    <property type="entry name" value="DapD_actino"/>
    <property type="match status" value="1"/>
</dbReference>
<dbReference type="Pfam" id="PF14602">
    <property type="entry name" value="Hexapep_2"/>
    <property type="match status" value="1"/>
</dbReference>
<dbReference type="Pfam" id="PF14789">
    <property type="entry name" value="THDPS_M"/>
    <property type="match status" value="1"/>
</dbReference>
<dbReference type="SUPFAM" id="SSF51161">
    <property type="entry name" value="Trimeric LpxA-like enzymes"/>
    <property type="match status" value="1"/>
</dbReference>